<accession>Q9SYQ1</accession>
<accession>Q1PFU6</accession>
<keyword id="KW-0472">Membrane</keyword>
<keyword id="KW-0592">Phosphate transport</keyword>
<keyword id="KW-0597">Phosphoprotein</keyword>
<keyword id="KW-1185">Reference proteome</keyword>
<keyword id="KW-0769">Symport</keyword>
<keyword id="KW-0812">Transmembrane</keyword>
<keyword id="KW-1133">Transmembrane helix</keyword>
<keyword id="KW-0813">Transport</keyword>
<proteinExistence type="evidence at transcript level"/>
<dbReference type="EMBL" id="AC007369">
    <property type="protein sequence ID" value="AAD30606.1"/>
    <property type="status" value="ALT_SEQ"/>
    <property type="molecule type" value="Genomic_DNA"/>
</dbReference>
<dbReference type="EMBL" id="CP002684">
    <property type="protein sequence ID" value="AEE30032.1"/>
    <property type="molecule type" value="Genomic_DNA"/>
</dbReference>
<dbReference type="EMBL" id="DQ446267">
    <property type="protein sequence ID" value="ABE65636.1"/>
    <property type="molecule type" value="mRNA"/>
</dbReference>
<dbReference type="PIR" id="B86341">
    <property type="entry name" value="B86341"/>
</dbReference>
<dbReference type="RefSeq" id="NP_173510.1">
    <property type="nucleotide sequence ID" value="NM_101939.1"/>
</dbReference>
<dbReference type="SMR" id="Q9SYQ1"/>
<dbReference type="FunCoup" id="Q9SYQ1">
    <property type="interactions" value="380"/>
</dbReference>
<dbReference type="STRING" id="3702.Q9SYQ1"/>
<dbReference type="GlyGen" id="Q9SYQ1">
    <property type="glycosylation" value="1 site"/>
</dbReference>
<dbReference type="PaxDb" id="3702-AT1G20860.1"/>
<dbReference type="EnsemblPlants" id="AT1G20860.1">
    <property type="protein sequence ID" value="AT1G20860.1"/>
    <property type="gene ID" value="AT1G20860"/>
</dbReference>
<dbReference type="GeneID" id="838678"/>
<dbReference type="Gramene" id="AT1G20860.1">
    <property type="protein sequence ID" value="AT1G20860.1"/>
    <property type="gene ID" value="AT1G20860"/>
</dbReference>
<dbReference type="KEGG" id="ath:AT1G20860"/>
<dbReference type="Araport" id="AT1G20860"/>
<dbReference type="TAIR" id="AT1G20860">
    <property type="gene designation" value="PHT1"/>
</dbReference>
<dbReference type="eggNOG" id="KOG0252">
    <property type="taxonomic scope" value="Eukaryota"/>
</dbReference>
<dbReference type="HOGENOM" id="CLU_001265_46_14_1"/>
<dbReference type="InParanoid" id="Q9SYQ1"/>
<dbReference type="PhylomeDB" id="Q9SYQ1"/>
<dbReference type="PRO" id="PR:Q9SYQ1"/>
<dbReference type="Proteomes" id="UP000006548">
    <property type="component" value="Chromosome 1"/>
</dbReference>
<dbReference type="ExpressionAtlas" id="Q9SYQ1">
    <property type="expression patterns" value="baseline and differential"/>
</dbReference>
<dbReference type="GO" id="GO:0016020">
    <property type="term" value="C:membrane"/>
    <property type="evidence" value="ECO:0007669"/>
    <property type="project" value="UniProtKB-SubCell"/>
</dbReference>
<dbReference type="GO" id="GO:0015293">
    <property type="term" value="F:symporter activity"/>
    <property type="evidence" value="ECO:0007669"/>
    <property type="project" value="UniProtKB-KW"/>
</dbReference>
<dbReference type="GO" id="GO:0006817">
    <property type="term" value="P:phosphate ion transport"/>
    <property type="evidence" value="ECO:0007669"/>
    <property type="project" value="UniProtKB-KW"/>
</dbReference>
<dbReference type="CDD" id="cd17364">
    <property type="entry name" value="MFS_PhT"/>
    <property type="match status" value="1"/>
</dbReference>
<dbReference type="FunFam" id="1.20.1250.20:FF:000175">
    <property type="entry name" value="Inorganic phosphate transporter 1-6"/>
    <property type="match status" value="1"/>
</dbReference>
<dbReference type="Gene3D" id="1.20.1250.20">
    <property type="entry name" value="MFS general substrate transporter like domains"/>
    <property type="match status" value="1"/>
</dbReference>
<dbReference type="InterPro" id="IPR020846">
    <property type="entry name" value="MFS_dom"/>
</dbReference>
<dbReference type="InterPro" id="IPR005828">
    <property type="entry name" value="MFS_sugar_transport-like"/>
</dbReference>
<dbReference type="InterPro" id="IPR036259">
    <property type="entry name" value="MFS_trans_sf"/>
</dbReference>
<dbReference type="InterPro" id="IPR005829">
    <property type="entry name" value="Sugar_transporter_CS"/>
</dbReference>
<dbReference type="PANTHER" id="PTHR24064">
    <property type="entry name" value="SOLUTE CARRIER FAMILY 22 MEMBER"/>
    <property type="match status" value="1"/>
</dbReference>
<dbReference type="Pfam" id="PF00083">
    <property type="entry name" value="Sugar_tr"/>
    <property type="match status" value="1"/>
</dbReference>
<dbReference type="SUPFAM" id="SSF103473">
    <property type="entry name" value="MFS general substrate transporter"/>
    <property type="match status" value="1"/>
</dbReference>
<dbReference type="PROSITE" id="PS50850">
    <property type="entry name" value="MFS"/>
    <property type="match status" value="1"/>
</dbReference>
<dbReference type="PROSITE" id="PS00217">
    <property type="entry name" value="SUGAR_TRANSPORT_2"/>
    <property type="match status" value="1"/>
</dbReference>
<evidence type="ECO:0000250" key="1"/>
<evidence type="ECO:0000250" key="2">
    <source>
        <dbReference type="UniProtKB" id="Q96303"/>
    </source>
</evidence>
<evidence type="ECO:0000255" key="3"/>
<evidence type="ECO:0000256" key="4">
    <source>
        <dbReference type="SAM" id="MobiDB-lite"/>
    </source>
</evidence>
<evidence type="ECO:0000269" key="5">
    <source>
    </source>
</evidence>
<evidence type="ECO:0000269" key="6">
    <source>
    </source>
</evidence>
<evidence type="ECO:0000305" key="7"/>
<sequence>MPIKVLSSLDVARTQWYHFKAIIVAGMGLFTDAYDLFCIAPVMKMISHVYYNGDSINTAVLSTSYAIALLGTATGQLVFGYLGDRVGRRRVYGLCLIIMILSSFGCGFSVCTTRRSCVMVSLGFFRFFLGLGIGGDYPLSATIMSEFANKRTRGAFIAAVFSMQGLGILVSSAVTMAVCVAFKRSGGGLEVDAAAPTEADLAWRLILMIGALPAALTFYWRMLMPETARYTALVENNIVQAAKDMQRVMSRSHISDEATTDPPPPPPPPSYKLFSRCFFRLHGRDLFAASFNWFLVDIVFYTSNLLLSHIFSHYSKKPSTAENVYDAAFEVAELGAIIAACSTIPGYWFTVYFIDKIGRVKIQIMGFFFMAVIYLVAGIPYSWYWSKHEHNNKGFMVLYGLVFFFCNFGPNTTTFIIPAEHFPARFRSTCHGISGAAGKLGAIVGTVGFLWATKKMESDDKNQIYPEVNRMRIAFLILGGVCIAGILVTYFFTKETMGRSLEENEHDQDNNAESEDEPQIVDGQSSVSTLLQTR</sequence>
<protein>
    <recommendedName>
        <fullName>Probable inorganic phosphate transporter 1-8</fullName>
        <shortName>AtPht1;8</shortName>
    </recommendedName>
    <alternativeName>
        <fullName>H(+)/Pi cotransporter</fullName>
    </alternativeName>
</protein>
<comment type="function">
    <text evidence="1">High-affinity transporter for external inorganic phosphate.</text>
</comment>
<comment type="subcellular location">
    <subcellularLocation>
        <location evidence="1">Membrane</location>
        <topology evidence="1">Multi-pass membrane protein</topology>
    </subcellularLocation>
</comment>
<comment type="tissue specificity">
    <text evidence="6">In roots.</text>
</comment>
<comment type="induction">
    <text evidence="5 6">Slightly induced in roots during phosphate starvation.</text>
</comment>
<comment type="miscellaneous">
    <text>Although related to the sugar transporter family, it does not transport sugars.</text>
</comment>
<comment type="similarity">
    <text evidence="7">Belongs to the major facilitator superfamily. Phosphate:H(+) symporter (TC 2.A.1.9) family.</text>
</comment>
<comment type="sequence caution" evidence="7">
    <conflict type="erroneous gene model prediction">
        <sequence resource="EMBL-CDS" id="AAD30606"/>
    </conflict>
</comment>
<gene>
    <name type="primary">PHT1-8</name>
    <name type="ordered locus">At1g20860</name>
    <name type="ORF">F9H16.16</name>
</gene>
<feature type="chain" id="PRO_0000050475" description="Probable inorganic phosphate transporter 1-8">
    <location>
        <begin position="1"/>
        <end position="534"/>
    </location>
</feature>
<feature type="topological domain" description="Cytoplasmic" evidence="3">
    <location>
        <begin position="1"/>
        <end position="21"/>
    </location>
</feature>
<feature type="transmembrane region" description="Helical" evidence="3">
    <location>
        <begin position="22"/>
        <end position="42"/>
    </location>
</feature>
<feature type="topological domain" description="Extracellular" evidence="3">
    <location>
        <begin position="43"/>
        <end position="61"/>
    </location>
</feature>
<feature type="transmembrane region" description="Helical" evidence="3">
    <location>
        <begin position="62"/>
        <end position="82"/>
    </location>
</feature>
<feature type="topological domain" description="Cytoplasmic" evidence="3">
    <location>
        <begin position="83"/>
        <end position="90"/>
    </location>
</feature>
<feature type="transmembrane region" description="Helical" evidence="3">
    <location>
        <begin position="91"/>
        <end position="111"/>
    </location>
</feature>
<feature type="topological domain" description="Extracellular" evidence="3">
    <location>
        <begin position="112"/>
        <end position="123"/>
    </location>
</feature>
<feature type="transmembrane region" description="Helical" evidence="3">
    <location>
        <begin position="124"/>
        <end position="144"/>
    </location>
</feature>
<feature type="topological domain" description="Cytoplasmic" evidence="3">
    <location>
        <begin position="145"/>
        <end position="153"/>
    </location>
</feature>
<feature type="transmembrane region" description="Helical" evidence="3">
    <location>
        <begin position="154"/>
        <end position="174"/>
    </location>
</feature>
<feature type="topological domain" description="Extracellular" evidence="3">
    <location>
        <begin position="175"/>
        <end position="199"/>
    </location>
</feature>
<feature type="transmembrane region" description="Helical" evidence="3">
    <location>
        <begin position="200"/>
        <end position="220"/>
    </location>
</feature>
<feature type="topological domain" description="Cytoplasmic" evidence="3">
    <location>
        <begin position="221"/>
        <end position="281"/>
    </location>
</feature>
<feature type="transmembrane region" description="Helical" evidence="3">
    <location>
        <begin position="282"/>
        <end position="302"/>
    </location>
</feature>
<feature type="topological domain" description="Extracellular" evidence="3">
    <location>
        <begin position="303"/>
        <end position="333"/>
    </location>
</feature>
<feature type="transmembrane region" description="Helical" evidence="3">
    <location>
        <begin position="334"/>
        <end position="354"/>
    </location>
</feature>
<feature type="topological domain" description="Cytoplasmic" evidence="3">
    <location>
        <begin position="355"/>
        <end position="361"/>
    </location>
</feature>
<feature type="transmembrane region" description="Helical" evidence="3">
    <location>
        <begin position="362"/>
        <end position="382"/>
    </location>
</feature>
<feature type="topological domain" description="Extracellular" evidence="3">
    <location>
        <begin position="383"/>
        <end position="396"/>
    </location>
</feature>
<feature type="transmembrane region" description="Helical" evidence="3">
    <location>
        <begin position="397"/>
        <end position="417"/>
    </location>
</feature>
<feature type="topological domain" description="Cytoplasmic" evidence="3">
    <location>
        <begin position="418"/>
        <end position="431"/>
    </location>
</feature>
<feature type="transmembrane region" description="Helical" evidence="3">
    <location>
        <begin position="432"/>
        <end position="452"/>
    </location>
</feature>
<feature type="topological domain" description="Extracellular" evidence="3">
    <location>
        <begin position="453"/>
        <end position="472"/>
    </location>
</feature>
<feature type="transmembrane region" description="Helical" evidence="3">
    <location>
        <begin position="473"/>
        <end position="493"/>
    </location>
</feature>
<feature type="topological domain" description="Cytoplasmic" evidence="3">
    <location>
        <begin position="494"/>
        <end position="534"/>
    </location>
</feature>
<feature type="region of interest" description="Disordered" evidence="4">
    <location>
        <begin position="501"/>
        <end position="534"/>
    </location>
</feature>
<feature type="compositionally biased region" description="Acidic residues" evidence="4">
    <location>
        <begin position="510"/>
        <end position="519"/>
    </location>
</feature>
<feature type="compositionally biased region" description="Polar residues" evidence="4">
    <location>
        <begin position="522"/>
        <end position="534"/>
    </location>
</feature>
<feature type="modified residue" description="Phosphoserine" evidence="2">
    <location>
        <position position="514"/>
    </location>
</feature>
<organism>
    <name type="scientific">Arabidopsis thaliana</name>
    <name type="common">Mouse-ear cress</name>
    <dbReference type="NCBI Taxonomy" id="3702"/>
    <lineage>
        <taxon>Eukaryota</taxon>
        <taxon>Viridiplantae</taxon>
        <taxon>Streptophyta</taxon>
        <taxon>Embryophyta</taxon>
        <taxon>Tracheophyta</taxon>
        <taxon>Spermatophyta</taxon>
        <taxon>Magnoliopsida</taxon>
        <taxon>eudicotyledons</taxon>
        <taxon>Gunneridae</taxon>
        <taxon>Pentapetalae</taxon>
        <taxon>rosids</taxon>
        <taxon>malvids</taxon>
        <taxon>Brassicales</taxon>
        <taxon>Brassicaceae</taxon>
        <taxon>Camelineae</taxon>
        <taxon>Arabidopsis</taxon>
    </lineage>
</organism>
<name>PHT18_ARATH</name>
<reference key="1">
    <citation type="journal article" date="2000" name="Nature">
        <title>Sequence and analysis of chromosome 1 of the plant Arabidopsis thaliana.</title>
        <authorList>
            <person name="Theologis A."/>
            <person name="Ecker J.R."/>
            <person name="Palm C.J."/>
            <person name="Federspiel N.A."/>
            <person name="Kaul S."/>
            <person name="White O."/>
            <person name="Alonso J."/>
            <person name="Altafi H."/>
            <person name="Araujo R."/>
            <person name="Bowman C.L."/>
            <person name="Brooks S.Y."/>
            <person name="Buehler E."/>
            <person name="Chan A."/>
            <person name="Chao Q."/>
            <person name="Chen H."/>
            <person name="Cheuk R.F."/>
            <person name="Chin C.W."/>
            <person name="Chung M.K."/>
            <person name="Conn L."/>
            <person name="Conway A.B."/>
            <person name="Conway A.R."/>
            <person name="Creasy T.H."/>
            <person name="Dewar K."/>
            <person name="Dunn P."/>
            <person name="Etgu P."/>
            <person name="Feldblyum T.V."/>
            <person name="Feng J.-D."/>
            <person name="Fong B."/>
            <person name="Fujii C.Y."/>
            <person name="Gill J.E."/>
            <person name="Goldsmith A.D."/>
            <person name="Haas B."/>
            <person name="Hansen N.F."/>
            <person name="Hughes B."/>
            <person name="Huizar L."/>
            <person name="Hunter J.L."/>
            <person name="Jenkins J."/>
            <person name="Johnson-Hopson C."/>
            <person name="Khan S."/>
            <person name="Khaykin E."/>
            <person name="Kim C.J."/>
            <person name="Koo H.L."/>
            <person name="Kremenetskaia I."/>
            <person name="Kurtz D.B."/>
            <person name="Kwan A."/>
            <person name="Lam B."/>
            <person name="Langin-Hooper S."/>
            <person name="Lee A."/>
            <person name="Lee J.M."/>
            <person name="Lenz C.A."/>
            <person name="Li J.H."/>
            <person name="Li Y.-P."/>
            <person name="Lin X."/>
            <person name="Liu S.X."/>
            <person name="Liu Z.A."/>
            <person name="Luros J.S."/>
            <person name="Maiti R."/>
            <person name="Marziali A."/>
            <person name="Militscher J."/>
            <person name="Miranda M."/>
            <person name="Nguyen M."/>
            <person name="Nierman W.C."/>
            <person name="Osborne B.I."/>
            <person name="Pai G."/>
            <person name="Peterson J."/>
            <person name="Pham P.K."/>
            <person name="Rizzo M."/>
            <person name="Rooney T."/>
            <person name="Rowley D."/>
            <person name="Sakano H."/>
            <person name="Salzberg S.L."/>
            <person name="Schwartz J.R."/>
            <person name="Shinn P."/>
            <person name="Southwick A.M."/>
            <person name="Sun H."/>
            <person name="Tallon L.J."/>
            <person name="Tambunga G."/>
            <person name="Toriumi M.J."/>
            <person name="Town C.D."/>
            <person name="Utterback T."/>
            <person name="Van Aken S."/>
            <person name="Vaysberg M."/>
            <person name="Vysotskaia V.S."/>
            <person name="Walker M."/>
            <person name="Wu D."/>
            <person name="Yu G."/>
            <person name="Fraser C.M."/>
            <person name="Venter J.C."/>
            <person name="Davis R.W."/>
        </authorList>
    </citation>
    <scope>NUCLEOTIDE SEQUENCE [LARGE SCALE GENOMIC DNA]</scope>
    <source>
        <strain>cv. Columbia</strain>
    </source>
</reference>
<reference key="2">
    <citation type="journal article" date="2017" name="Plant J.">
        <title>Araport11: a complete reannotation of the Arabidopsis thaliana reference genome.</title>
        <authorList>
            <person name="Cheng C.Y."/>
            <person name="Krishnakumar V."/>
            <person name="Chan A.P."/>
            <person name="Thibaud-Nissen F."/>
            <person name="Schobel S."/>
            <person name="Town C.D."/>
        </authorList>
    </citation>
    <scope>GENOME REANNOTATION</scope>
    <source>
        <strain>cv. Columbia</strain>
    </source>
</reference>
<reference key="3">
    <citation type="journal article" date="2006" name="Plant Biotechnol. J.">
        <title>Simultaneous high-throughput recombinational cloning of open reading frames in closed and open configurations.</title>
        <authorList>
            <person name="Underwood B.A."/>
            <person name="Vanderhaeghen R."/>
            <person name="Whitford R."/>
            <person name="Town C.D."/>
            <person name="Hilson P."/>
        </authorList>
    </citation>
    <scope>NUCLEOTIDE SEQUENCE [LARGE SCALE MRNA]</scope>
    <source>
        <strain>cv. Columbia</strain>
    </source>
</reference>
<reference key="4">
    <citation type="journal article" date="2002" name="Plant J.">
        <title>Expression analysis suggests novel roles for members of the Pht1 family of phosphate transporters in Arabidopsis.</title>
        <authorList>
            <person name="Mudge S.R."/>
            <person name="Rae A.L."/>
            <person name="Diatloff E."/>
            <person name="Smith F.W."/>
        </authorList>
    </citation>
    <scope>INDUCTION</scope>
    <scope>GENE FAMILY</scope>
    <scope>NOMENCLATURE</scope>
</reference>
<reference key="5">
    <citation type="journal article" date="2004" name="Plant Mol. Biol.">
        <title>Transcriptional regulation and functional properties of Arabidopsis Pht1;4, a high affinity transporter contributing greatly to phosphate uptake in phosphate deprived plants.</title>
        <authorList>
            <person name="Misson J."/>
            <person name="Thibaud M.-C."/>
            <person name="Bechtold N."/>
            <person name="Raghothama K."/>
            <person name="Nussaume L."/>
        </authorList>
    </citation>
    <scope>INDUCTION</scope>
    <scope>TISSUE SPECIFICITY</scope>
</reference>